<gene>
    <name type="ordered locus">ABBFA_001989</name>
</gene>
<protein>
    <recommendedName>
        <fullName evidence="1">Probable transcriptional regulatory protein ABBFA_001989</fullName>
    </recommendedName>
</protein>
<sequence length="249" mass="27012">MAGHSKWANIKHRKAKQDASRGKVFTKYIREIVTAAKLGGADPASNPRLRAVVEKALSVNMTRDTINRAIQRGVGGEDNDDLKEVTYEGYGVGGVAVLVETMTDNLNRTVPDVRHCFSKTNGNLGTAGSVAYLFTKRGEITFDDVSLEDKIMDVALEAGAEDIEVSEDEILVITSPETFGEVQDALAAAGLKSDNAEVVMSPSTKAEITDIDQAKQVMKLIDMLEDLDDVQNVYTNVEFSDEVLAQLDA</sequence>
<name>Y1989_ACIB3</name>
<evidence type="ECO:0000255" key="1">
    <source>
        <dbReference type="HAMAP-Rule" id="MF_00693"/>
    </source>
</evidence>
<feature type="chain" id="PRO_1000132135" description="Probable transcriptional regulatory protein ABBFA_001989">
    <location>
        <begin position="1"/>
        <end position="249"/>
    </location>
</feature>
<accession>B7H3U3</accession>
<proteinExistence type="inferred from homology"/>
<organism>
    <name type="scientific">Acinetobacter baumannii (strain AB307-0294)</name>
    <dbReference type="NCBI Taxonomy" id="557600"/>
    <lineage>
        <taxon>Bacteria</taxon>
        <taxon>Pseudomonadati</taxon>
        <taxon>Pseudomonadota</taxon>
        <taxon>Gammaproteobacteria</taxon>
        <taxon>Moraxellales</taxon>
        <taxon>Moraxellaceae</taxon>
        <taxon>Acinetobacter</taxon>
        <taxon>Acinetobacter calcoaceticus/baumannii complex</taxon>
    </lineage>
</organism>
<comment type="subcellular location">
    <subcellularLocation>
        <location evidence="1">Cytoplasm</location>
    </subcellularLocation>
</comment>
<comment type="similarity">
    <text evidence="1">Belongs to the TACO1 family.</text>
</comment>
<reference key="1">
    <citation type="journal article" date="2008" name="J. Bacteriol.">
        <title>Comparative genome sequence analysis of multidrug-resistant Acinetobacter baumannii.</title>
        <authorList>
            <person name="Adams M.D."/>
            <person name="Goglin K."/>
            <person name="Molyneaux N."/>
            <person name="Hujer K.M."/>
            <person name="Lavender H."/>
            <person name="Jamison J.J."/>
            <person name="MacDonald I.J."/>
            <person name="Martin K.M."/>
            <person name="Russo T."/>
            <person name="Campagnari A.A."/>
            <person name="Hujer A.M."/>
            <person name="Bonomo R.A."/>
            <person name="Gill S.R."/>
        </authorList>
    </citation>
    <scope>NUCLEOTIDE SEQUENCE [LARGE SCALE GENOMIC DNA]</scope>
    <source>
        <strain>AB307-0294</strain>
    </source>
</reference>
<dbReference type="EMBL" id="CP001172">
    <property type="protein sequence ID" value="ACJ58397.1"/>
    <property type="molecule type" value="Genomic_DNA"/>
</dbReference>
<dbReference type="RefSeq" id="WP_000907230.1">
    <property type="nucleotide sequence ID" value="NZ_CP001172.1"/>
</dbReference>
<dbReference type="SMR" id="B7H3U3"/>
<dbReference type="HOGENOM" id="CLU_062974_2_2_6"/>
<dbReference type="Proteomes" id="UP000006924">
    <property type="component" value="Chromosome"/>
</dbReference>
<dbReference type="GO" id="GO:0005829">
    <property type="term" value="C:cytosol"/>
    <property type="evidence" value="ECO:0007669"/>
    <property type="project" value="TreeGrafter"/>
</dbReference>
<dbReference type="GO" id="GO:0003677">
    <property type="term" value="F:DNA binding"/>
    <property type="evidence" value="ECO:0007669"/>
    <property type="project" value="UniProtKB-UniRule"/>
</dbReference>
<dbReference type="GO" id="GO:0006355">
    <property type="term" value="P:regulation of DNA-templated transcription"/>
    <property type="evidence" value="ECO:0007669"/>
    <property type="project" value="UniProtKB-UniRule"/>
</dbReference>
<dbReference type="FunFam" id="1.10.10.200:FF:000001">
    <property type="entry name" value="Probable transcriptional regulatory protein YebC"/>
    <property type="match status" value="1"/>
</dbReference>
<dbReference type="FunFam" id="3.30.70.980:FF:000002">
    <property type="entry name" value="Probable transcriptional regulatory protein YebC"/>
    <property type="match status" value="1"/>
</dbReference>
<dbReference type="Gene3D" id="1.10.10.200">
    <property type="match status" value="1"/>
</dbReference>
<dbReference type="Gene3D" id="3.30.70.980">
    <property type="match status" value="2"/>
</dbReference>
<dbReference type="HAMAP" id="MF_00693">
    <property type="entry name" value="Transcrip_reg_TACO1"/>
    <property type="match status" value="1"/>
</dbReference>
<dbReference type="InterPro" id="IPR017856">
    <property type="entry name" value="Integrase-like_N"/>
</dbReference>
<dbReference type="InterPro" id="IPR048300">
    <property type="entry name" value="TACO1_YebC-like_2nd/3rd_dom"/>
</dbReference>
<dbReference type="InterPro" id="IPR049083">
    <property type="entry name" value="TACO1_YebC_N"/>
</dbReference>
<dbReference type="InterPro" id="IPR002876">
    <property type="entry name" value="Transcrip_reg_TACO1-like"/>
</dbReference>
<dbReference type="InterPro" id="IPR026564">
    <property type="entry name" value="Transcrip_reg_TACO1-like_dom3"/>
</dbReference>
<dbReference type="InterPro" id="IPR029072">
    <property type="entry name" value="YebC-like"/>
</dbReference>
<dbReference type="NCBIfam" id="NF001030">
    <property type="entry name" value="PRK00110.1"/>
    <property type="match status" value="1"/>
</dbReference>
<dbReference type="NCBIfam" id="NF009044">
    <property type="entry name" value="PRK12378.1"/>
    <property type="match status" value="1"/>
</dbReference>
<dbReference type="NCBIfam" id="TIGR01033">
    <property type="entry name" value="YebC/PmpR family DNA-binding transcriptional regulator"/>
    <property type="match status" value="1"/>
</dbReference>
<dbReference type="PANTHER" id="PTHR12532:SF6">
    <property type="entry name" value="TRANSCRIPTIONAL REGULATORY PROTEIN YEBC-RELATED"/>
    <property type="match status" value="1"/>
</dbReference>
<dbReference type="PANTHER" id="PTHR12532">
    <property type="entry name" value="TRANSLATIONAL ACTIVATOR OF CYTOCHROME C OXIDASE 1"/>
    <property type="match status" value="1"/>
</dbReference>
<dbReference type="Pfam" id="PF20772">
    <property type="entry name" value="TACO1_YebC_N"/>
    <property type="match status" value="1"/>
</dbReference>
<dbReference type="Pfam" id="PF01709">
    <property type="entry name" value="Transcrip_reg"/>
    <property type="match status" value="1"/>
</dbReference>
<dbReference type="SUPFAM" id="SSF75625">
    <property type="entry name" value="YebC-like"/>
    <property type="match status" value="1"/>
</dbReference>
<keyword id="KW-0963">Cytoplasm</keyword>
<keyword id="KW-0238">DNA-binding</keyword>
<keyword id="KW-0804">Transcription</keyword>
<keyword id="KW-0805">Transcription regulation</keyword>